<proteinExistence type="evidence at transcript level"/>
<sequence>MMDMFFAYLLVASATPLFIWLDNKKVALSAIPPIILMWVFFFFYATESLSPLGHTLMIILFAVNVIVAHIAAFIIYGLPYLRRKRSS</sequence>
<dbReference type="EMBL" id="X73124">
    <property type="protein sequence ID" value="CAA51597.1"/>
    <property type="molecule type" value="Genomic_DNA"/>
</dbReference>
<dbReference type="EMBL" id="AL009126">
    <property type="protein sequence ID" value="CAB15839.1"/>
    <property type="molecule type" value="Genomic_DNA"/>
</dbReference>
<dbReference type="PIR" id="S39696">
    <property type="entry name" value="S39696"/>
</dbReference>
<dbReference type="RefSeq" id="NP_391692.1">
    <property type="nucleotide sequence ID" value="NC_000964.3"/>
</dbReference>
<dbReference type="RefSeq" id="WP_003227411.1">
    <property type="nucleotide sequence ID" value="NZ_OZ025638.1"/>
</dbReference>
<dbReference type="FunCoup" id="P39603">
    <property type="interactions" value="12"/>
</dbReference>
<dbReference type="STRING" id="224308.BSU38130"/>
<dbReference type="TCDB" id="1.E.23.1.1">
    <property type="family name" value="the bacillus spore morphogenesis and germination holin (bsh) family"/>
</dbReference>
<dbReference type="PaxDb" id="224308-BSU38130"/>
<dbReference type="EnsemblBacteria" id="CAB15839">
    <property type="protein sequence ID" value="CAB15839"/>
    <property type="gene ID" value="BSU_38130"/>
</dbReference>
<dbReference type="GeneID" id="86871560"/>
<dbReference type="GeneID" id="937296"/>
<dbReference type="KEGG" id="bsu:BSU38130"/>
<dbReference type="PATRIC" id="fig|224308.43.peg.3997"/>
<dbReference type="eggNOG" id="ENOG5033HBX">
    <property type="taxonomic scope" value="Bacteria"/>
</dbReference>
<dbReference type="InParanoid" id="P39603"/>
<dbReference type="OrthoDB" id="2680024at2"/>
<dbReference type="BioCyc" id="BSUB:BSU38130-MONOMER"/>
<dbReference type="Proteomes" id="UP000001570">
    <property type="component" value="Chromosome"/>
</dbReference>
<dbReference type="GO" id="GO:0043594">
    <property type="term" value="C:outer endospore membrane"/>
    <property type="evidence" value="ECO:0007669"/>
    <property type="project" value="UniProtKB-SubCell"/>
</dbReference>
<dbReference type="GO" id="GO:0005886">
    <property type="term" value="C:plasma membrane"/>
    <property type="evidence" value="ECO:0007669"/>
    <property type="project" value="UniProtKB-SubCell"/>
</dbReference>
<dbReference type="GO" id="GO:0009847">
    <property type="term" value="P:spore germination"/>
    <property type="evidence" value="ECO:0000315"/>
    <property type="project" value="CACAO"/>
</dbReference>
<dbReference type="InterPro" id="IPR020185">
    <property type="entry name" value="Spore_morphogenesis_YwcE"/>
</dbReference>
<dbReference type="Pfam" id="PF17368">
    <property type="entry name" value="YwcE"/>
    <property type="match status" value="1"/>
</dbReference>
<organism>
    <name type="scientific">Bacillus subtilis (strain 168)</name>
    <dbReference type="NCBI Taxonomy" id="224308"/>
    <lineage>
        <taxon>Bacteria</taxon>
        <taxon>Bacillati</taxon>
        <taxon>Bacillota</taxon>
        <taxon>Bacilli</taxon>
        <taxon>Bacillales</taxon>
        <taxon>Bacillaceae</taxon>
        <taxon>Bacillus</taxon>
    </lineage>
</organism>
<accession>P39603</accession>
<keyword id="KW-1003">Cell membrane</keyword>
<keyword id="KW-0309">Germination</keyword>
<keyword id="KW-0472">Membrane</keyword>
<keyword id="KW-1185">Reference proteome</keyword>
<keyword id="KW-0812">Transmembrane</keyword>
<keyword id="KW-1133">Transmembrane helix</keyword>
<gene>
    <name type="primary">ywcE</name>
    <name type="ordered locus">BSU38130</name>
    <name type="ORF">ipa-41r</name>
</gene>
<reference key="1">
    <citation type="journal article" date="1993" name="Mol. Microbiol.">
        <title>Bacillus subtilis genome project: cloning and sequencing of the 97 kb region from 325 degrees to 333 degrees.</title>
        <authorList>
            <person name="Glaser P."/>
            <person name="Kunst F."/>
            <person name="Arnaud M."/>
            <person name="Coudart M.P."/>
            <person name="Gonzales W."/>
            <person name="Hullo M.-F."/>
            <person name="Ionescu M."/>
            <person name="Lubochinsky B."/>
            <person name="Marcelino L."/>
            <person name="Moszer I."/>
            <person name="Presecan E."/>
            <person name="Santana M."/>
            <person name="Schneider E."/>
            <person name="Schweizer J."/>
            <person name="Vertes A."/>
            <person name="Rapoport G."/>
            <person name="Danchin A."/>
        </authorList>
    </citation>
    <scope>NUCLEOTIDE SEQUENCE [GENOMIC DNA]</scope>
    <source>
        <strain>168</strain>
    </source>
</reference>
<reference key="2">
    <citation type="journal article" date="1997" name="Nature">
        <title>The complete genome sequence of the Gram-positive bacterium Bacillus subtilis.</title>
        <authorList>
            <person name="Kunst F."/>
            <person name="Ogasawara N."/>
            <person name="Moszer I."/>
            <person name="Albertini A.M."/>
            <person name="Alloni G."/>
            <person name="Azevedo V."/>
            <person name="Bertero M.G."/>
            <person name="Bessieres P."/>
            <person name="Bolotin A."/>
            <person name="Borchert S."/>
            <person name="Borriss R."/>
            <person name="Boursier L."/>
            <person name="Brans A."/>
            <person name="Braun M."/>
            <person name="Brignell S.C."/>
            <person name="Bron S."/>
            <person name="Brouillet S."/>
            <person name="Bruschi C.V."/>
            <person name="Caldwell B."/>
            <person name="Capuano V."/>
            <person name="Carter N.M."/>
            <person name="Choi S.-K."/>
            <person name="Codani J.-J."/>
            <person name="Connerton I.F."/>
            <person name="Cummings N.J."/>
            <person name="Daniel R.A."/>
            <person name="Denizot F."/>
            <person name="Devine K.M."/>
            <person name="Duesterhoeft A."/>
            <person name="Ehrlich S.D."/>
            <person name="Emmerson P.T."/>
            <person name="Entian K.-D."/>
            <person name="Errington J."/>
            <person name="Fabret C."/>
            <person name="Ferrari E."/>
            <person name="Foulger D."/>
            <person name="Fritz C."/>
            <person name="Fujita M."/>
            <person name="Fujita Y."/>
            <person name="Fuma S."/>
            <person name="Galizzi A."/>
            <person name="Galleron N."/>
            <person name="Ghim S.-Y."/>
            <person name="Glaser P."/>
            <person name="Goffeau A."/>
            <person name="Golightly E.J."/>
            <person name="Grandi G."/>
            <person name="Guiseppi G."/>
            <person name="Guy B.J."/>
            <person name="Haga K."/>
            <person name="Haiech J."/>
            <person name="Harwood C.R."/>
            <person name="Henaut A."/>
            <person name="Hilbert H."/>
            <person name="Holsappel S."/>
            <person name="Hosono S."/>
            <person name="Hullo M.-F."/>
            <person name="Itaya M."/>
            <person name="Jones L.-M."/>
            <person name="Joris B."/>
            <person name="Karamata D."/>
            <person name="Kasahara Y."/>
            <person name="Klaerr-Blanchard M."/>
            <person name="Klein C."/>
            <person name="Kobayashi Y."/>
            <person name="Koetter P."/>
            <person name="Koningstein G."/>
            <person name="Krogh S."/>
            <person name="Kumano M."/>
            <person name="Kurita K."/>
            <person name="Lapidus A."/>
            <person name="Lardinois S."/>
            <person name="Lauber J."/>
            <person name="Lazarevic V."/>
            <person name="Lee S.-M."/>
            <person name="Levine A."/>
            <person name="Liu H."/>
            <person name="Masuda S."/>
            <person name="Mauel C."/>
            <person name="Medigue C."/>
            <person name="Medina N."/>
            <person name="Mellado R.P."/>
            <person name="Mizuno M."/>
            <person name="Moestl D."/>
            <person name="Nakai S."/>
            <person name="Noback M."/>
            <person name="Noone D."/>
            <person name="O'Reilly M."/>
            <person name="Ogawa K."/>
            <person name="Ogiwara A."/>
            <person name="Oudega B."/>
            <person name="Park S.-H."/>
            <person name="Parro V."/>
            <person name="Pohl T.M."/>
            <person name="Portetelle D."/>
            <person name="Porwollik S."/>
            <person name="Prescott A.M."/>
            <person name="Presecan E."/>
            <person name="Pujic P."/>
            <person name="Purnelle B."/>
            <person name="Rapoport G."/>
            <person name="Rey M."/>
            <person name="Reynolds S."/>
            <person name="Rieger M."/>
            <person name="Rivolta C."/>
            <person name="Rocha E."/>
            <person name="Roche B."/>
            <person name="Rose M."/>
            <person name="Sadaie Y."/>
            <person name="Sato T."/>
            <person name="Scanlan E."/>
            <person name="Schleich S."/>
            <person name="Schroeter R."/>
            <person name="Scoffone F."/>
            <person name="Sekiguchi J."/>
            <person name="Sekowska A."/>
            <person name="Seror S.J."/>
            <person name="Serror P."/>
            <person name="Shin B.-S."/>
            <person name="Soldo B."/>
            <person name="Sorokin A."/>
            <person name="Tacconi E."/>
            <person name="Takagi T."/>
            <person name="Takahashi H."/>
            <person name="Takemaru K."/>
            <person name="Takeuchi M."/>
            <person name="Tamakoshi A."/>
            <person name="Tanaka T."/>
            <person name="Terpstra P."/>
            <person name="Tognoni A."/>
            <person name="Tosato V."/>
            <person name="Uchiyama S."/>
            <person name="Vandenbol M."/>
            <person name="Vannier F."/>
            <person name="Vassarotti A."/>
            <person name="Viari A."/>
            <person name="Wambutt R."/>
            <person name="Wedler E."/>
            <person name="Wedler H."/>
            <person name="Weitzenegger T."/>
            <person name="Winters P."/>
            <person name="Wipat A."/>
            <person name="Yamamoto H."/>
            <person name="Yamane K."/>
            <person name="Yasumoto K."/>
            <person name="Yata K."/>
            <person name="Yoshida K."/>
            <person name="Yoshikawa H.-F."/>
            <person name="Zumstein E."/>
            <person name="Yoshikawa H."/>
            <person name="Danchin A."/>
        </authorList>
    </citation>
    <scope>NUCLEOTIDE SEQUENCE [LARGE SCALE GENOMIC DNA]</scope>
    <source>
        <strain>168</strain>
    </source>
</reference>
<reference key="3">
    <citation type="journal article" date="2005" name="J. Bacteriol.">
        <title>A gene encoding a holin-like protein involved in spore morphogenesis and spore germination in Bacillus subtilis.</title>
        <authorList>
            <person name="Real G."/>
            <person name="Pinto S.M."/>
            <person name="Schyns G."/>
            <person name="Costa T."/>
            <person name="Henriques A.O."/>
            <person name="Moran C.P. Jr."/>
        </authorList>
    </citation>
    <scope>FUNCTION</scope>
    <scope>SUBCELLULAR LOCATION</scope>
</reference>
<feature type="chain" id="PRO_0000049960" description="Spore morphogenesis and germination protein YwcE">
    <location>
        <begin position="1"/>
        <end position="87"/>
    </location>
</feature>
<feature type="transmembrane region" description="Helical" evidence="1">
    <location>
        <begin position="1"/>
        <end position="21"/>
    </location>
</feature>
<feature type="transmembrane region" description="Helical" evidence="1">
    <location>
        <begin position="26"/>
        <end position="46"/>
    </location>
</feature>
<feature type="transmembrane region" description="Helical" evidence="1">
    <location>
        <begin position="56"/>
        <end position="76"/>
    </location>
</feature>
<protein>
    <recommendedName>
        <fullName>Spore morphogenesis and germination protein YwcE</fullName>
    </recommendedName>
</protein>
<evidence type="ECO:0000255" key="1"/>
<evidence type="ECO:0000269" key="2">
    <source>
    </source>
</evidence>
<evidence type="ECO:0000305" key="3"/>
<name>YWCE_BACSU</name>
<comment type="function">
    <text evidence="2">Required for proper spore morphogenesis. Important for spore germination.</text>
</comment>
<comment type="subcellular location">
    <subcellularLocation>
        <location evidence="2">Cell membrane</location>
    </subcellularLocation>
    <subcellularLocation>
        <location evidence="2">Spore membrane</location>
        <topology evidence="2">Multi-pass membrane protein</topology>
    </subcellularLocation>
    <subcellularLocation>
        <location evidence="2">Spore outer membrane</location>
        <topology evidence="2">Multi-pass membrane protein</topology>
    </subcellularLocation>
    <text>Inner and outer prespore membrane. Mother cell membrane.</text>
</comment>
<comment type="developmental stage">
    <text>Expressed at the onset of sporulation.</text>
</comment>
<comment type="induction">
    <text>Repressed by AbrB during growth and activated at the onset of sporulation in a Spo0A-dependent manner.</text>
</comment>
<comment type="similarity">
    <text evidence="3">Belongs to the YwcE family.</text>
</comment>